<feature type="chain" id="PRO_0000138732" description="Geranylgeranylglyceryl phosphate synthase">
    <location>
        <begin position="1"/>
        <end position="253"/>
    </location>
</feature>
<feature type="binding site" evidence="1">
    <location>
        <position position="28"/>
    </location>
    <ligand>
        <name>Mg(2+)</name>
        <dbReference type="ChEBI" id="CHEBI:18420"/>
    </ligand>
</feature>
<feature type="binding site" evidence="1">
    <location>
        <position position="53"/>
    </location>
    <ligand>
        <name>Mg(2+)</name>
        <dbReference type="ChEBI" id="CHEBI:18420"/>
    </ligand>
</feature>
<feature type="binding site" evidence="1">
    <location>
        <begin position="172"/>
        <end position="178"/>
    </location>
    <ligand>
        <name>sn-glycerol 1-phosphate</name>
        <dbReference type="ChEBI" id="CHEBI:57685"/>
    </ligand>
</feature>
<feature type="binding site" evidence="1">
    <location>
        <begin position="203"/>
        <end position="204"/>
    </location>
    <ligand>
        <name>sn-glycerol 1-phosphate</name>
        <dbReference type="ChEBI" id="CHEBI:57685"/>
    </ligand>
</feature>
<feature type="binding site" evidence="1">
    <location>
        <begin position="225"/>
        <end position="226"/>
    </location>
    <ligand>
        <name>sn-glycerol 1-phosphate</name>
        <dbReference type="ChEBI" id="CHEBI:57685"/>
    </ligand>
</feature>
<protein>
    <recommendedName>
        <fullName evidence="1">Geranylgeranylglyceryl phosphate synthase</fullName>
        <shortName evidence="1">GGGP synthase</shortName>
        <shortName evidence="1">GGGPS</shortName>
        <ecNumber evidence="1">2.5.1.41</ecNumber>
    </recommendedName>
    <alternativeName>
        <fullName evidence="1">(S)-3-O-geranylgeranylglyceryl phosphate synthase</fullName>
    </alternativeName>
    <alternativeName>
        <fullName evidence="1">Phosphoglycerol geranylgeranyltransferase</fullName>
    </alternativeName>
</protein>
<evidence type="ECO:0000255" key="1">
    <source>
        <dbReference type="HAMAP-Rule" id="MF_00112"/>
    </source>
</evidence>
<organism>
    <name type="scientific">Methanocaldococcus jannaschii (strain ATCC 43067 / DSM 2661 / JAL-1 / JCM 10045 / NBRC 100440)</name>
    <name type="common">Methanococcus jannaschii</name>
    <dbReference type="NCBI Taxonomy" id="243232"/>
    <lineage>
        <taxon>Archaea</taxon>
        <taxon>Methanobacteriati</taxon>
        <taxon>Methanobacteriota</taxon>
        <taxon>Methanomada group</taxon>
        <taxon>Methanococci</taxon>
        <taxon>Methanococcales</taxon>
        <taxon>Methanocaldococcaceae</taxon>
        <taxon>Methanocaldococcus</taxon>
    </lineage>
</organism>
<keyword id="KW-0963">Cytoplasm</keyword>
<keyword id="KW-0444">Lipid biosynthesis</keyword>
<keyword id="KW-0443">Lipid metabolism</keyword>
<keyword id="KW-0460">Magnesium</keyword>
<keyword id="KW-0479">Metal-binding</keyword>
<keyword id="KW-0594">Phospholipid biosynthesis</keyword>
<keyword id="KW-1208">Phospholipid metabolism</keyword>
<keyword id="KW-1185">Reference proteome</keyword>
<keyword id="KW-0808">Transferase</keyword>
<accession>Q58647</accession>
<proteinExistence type="inferred from homology"/>
<sequence>MKIKIGKVEKRLNQIIEEEGAVYLTLLDPEEENIEEIAENVKDYADAIMVGGSIGIVNLDETVKKIKKITKLPIILFPGNVDGLSRYADAVFYMSLMNSANTYWVVTAPTLGAITILKYNLEPIPMAYLCIEPAKKTAVGYVGEIREIPQNKPKITAMYCLSAKFFGMRWAYLEAGSGASYPVNNETIALSKKLSGINIIVGGGIRKPEIAYEKVLAGADAIVTGNLLEENPKAVEMMYDAIKKAGKEKLKNK</sequence>
<reference key="1">
    <citation type="journal article" date="1996" name="Science">
        <title>Complete genome sequence of the methanogenic archaeon, Methanococcus jannaschii.</title>
        <authorList>
            <person name="Bult C.J."/>
            <person name="White O."/>
            <person name="Olsen G.J."/>
            <person name="Zhou L."/>
            <person name="Fleischmann R.D."/>
            <person name="Sutton G.G."/>
            <person name="Blake J.A."/>
            <person name="FitzGerald L.M."/>
            <person name="Clayton R.A."/>
            <person name="Gocayne J.D."/>
            <person name="Kerlavage A.R."/>
            <person name="Dougherty B.A."/>
            <person name="Tomb J.-F."/>
            <person name="Adams M.D."/>
            <person name="Reich C.I."/>
            <person name="Overbeek R."/>
            <person name="Kirkness E.F."/>
            <person name="Weinstock K.G."/>
            <person name="Merrick J.M."/>
            <person name="Glodek A."/>
            <person name="Scott J.L."/>
            <person name="Geoghagen N.S.M."/>
            <person name="Weidman J.F."/>
            <person name="Fuhrmann J.L."/>
            <person name="Nguyen D."/>
            <person name="Utterback T.R."/>
            <person name="Kelley J.M."/>
            <person name="Peterson J.D."/>
            <person name="Sadow P.W."/>
            <person name="Hanna M.C."/>
            <person name="Cotton M.D."/>
            <person name="Roberts K.M."/>
            <person name="Hurst M.A."/>
            <person name="Kaine B.P."/>
            <person name="Borodovsky M."/>
            <person name="Klenk H.-P."/>
            <person name="Fraser C.M."/>
            <person name="Smith H.O."/>
            <person name="Woese C.R."/>
            <person name="Venter J.C."/>
        </authorList>
    </citation>
    <scope>NUCLEOTIDE SEQUENCE [LARGE SCALE GENOMIC DNA]</scope>
    <source>
        <strain>ATCC 43067 / DSM 2661 / JAL-1 / JCM 10045 / NBRC 100440</strain>
    </source>
</reference>
<dbReference type="EC" id="2.5.1.41" evidence="1"/>
<dbReference type="EMBL" id="L77117">
    <property type="protein sequence ID" value="AAB99253.1"/>
    <property type="molecule type" value="Genomic_DNA"/>
</dbReference>
<dbReference type="PIR" id="A64456">
    <property type="entry name" value="A64456"/>
</dbReference>
<dbReference type="RefSeq" id="WP_010870763.1">
    <property type="nucleotide sequence ID" value="NC_000909.1"/>
</dbReference>
<dbReference type="SMR" id="Q58647"/>
<dbReference type="FunCoup" id="Q58647">
    <property type="interactions" value="1"/>
</dbReference>
<dbReference type="STRING" id="243232.MJ_1250"/>
<dbReference type="PaxDb" id="243232-MJ_1250"/>
<dbReference type="DNASU" id="1452148"/>
<dbReference type="EnsemblBacteria" id="AAB99253">
    <property type="protein sequence ID" value="AAB99253"/>
    <property type="gene ID" value="MJ_1250"/>
</dbReference>
<dbReference type="GeneID" id="1452148"/>
<dbReference type="KEGG" id="mja:MJ_1250"/>
<dbReference type="eggNOG" id="arCOG01085">
    <property type="taxonomic scope" value="Archaea"/>
</dbReference>
<dbReference type="HOGENOM" id="CLU_068610_0_0_2"/>
<dbReference type="InParanoid" id="Q58647"/>
<dbReference type="OrthoDB" id="7409at2157"/>
<dbReference type="PhylomeDB" id="Q58647"/>
<dbReference type="UniPathway" id="UPA00940"/>
<dbReference type="Proteomes" id="UP000000805">
    <property type="component" value="Chromosome"/>
</dbReference>
<dbReference type="GO" id="GO:0005737">
    <property type="term" value="C:cytoplasm"/>
    <property type="evidence" value="ECO:0007669"/>
    <property type="project" value="UniProtKB-SubCell"/>
</dbReference>
<dbReference type="GO" id="GO:0000107">
    <property type="term" value="F:imidazoleglycerol-phosphate synthase activity"/>
    <property type="evidence" value="ECO:0000318"/>
    <property type="project" value="GO_Central"/>
</dbReference>
<dbReference type="GO" id="GO:0000287">
    <property type="term" value="F:magnesium ion binding"/>
    <property type="evidence" value="ECO:0007669"/>
    <property type="project" value="UniProtKB-UniRule"/>
</dbReference>
<dbReference type="GO" id="GO:0047294">
    <property type="term" value="F:phosphoglycerol geranylgeranyltransferase activity"/>
    <property type="evidence" value="ECO:0007669"/>
    <property type="project" value="UniProtKB-UniRule"/>
</dbReference>
<dbReference type="GO" id="GO:0046474">
    <property type="term" value="P:glycerophospholipid biosynthetic process"/>
    <property type="evidence" value="ECO:0007669"/>
    <property type="project" value="UniProtKB-UniRule"/>
</dbReference>
<dbReference type="FunFam" id="3.20.20.390:FF:000001">
    <property type="entry name" value="Heptaprenylglyceryl phosphate synthase"/>
    <property type="match status" value="1"/>
</dbReference>
<dbReference type="Gene3D" id="3.20.20.390">
    <property type="entry name" value="FMN-linked oxidoreductases"/>
    <property type="match status" value="1"/>
</dbReference>
<dbReference type="HAMAP" id="MF_00112">
    <property type="entry name" value="GGGP_HepGP_synthase"/>
    <property type="match status" value="1"/>
</dbReference>
<dbReference type="InterPro" id="IPR038597">
    <property type="entry name" value="GGGP/HepGP_synthase_sf"/>
</dbReference>
<dbReference type="InterPro" id="IPR008205">
    <property type="entry name" value="GGGP_HepGP_synthase"/>
</dbReference>
<dbReference type="InterPro" id="IPR010946">
    <property type="entry name" value="GGGP_synth"/>
</dbReference>
<dbReference type="InterPro" id="IPR050064">
    <property type="entry name" value="IGPS_HisA/HisF"/>
</dbReference>
<dbReference type="NCBIfam" id="TIGR01769">
    <property type="entry name" value="GGGP"/>
    <property type="match status" value="1"/>
</dbReference>
<dbReference type="NCBIfam" id="TIGR01768">
    <property type="entry name" value="GGGP-family"/>
    <property type="match status" value="1"/>
</dbReference>
<dbReference type="NCBIfam" id="NF003198">
    <property type="entry name" value="PRK04169.1-2"/>
    <property type="match status" value="1"/>
</dbReference>
<dbReference type="NCBIfam" id="NF003201">
    <property type="entry name" value="PRK04169.1-5"/>
    <property type="match status" value="1"/>
</dbReference>
<dbReference type="PANTHER" id="PTHR21235:SF22">
    <property type="entry name" value="GERANYLGERANYLGLYCERYL PHOSPHATE SYNTHASE"/>
    <property type="match status" value="1"/>
</dbReference>
<dbReference type="PANTHER" id="PTHR21235">
    <property type="entry name" value="IMIDAZOLE GLYCEROL PHOSPHATE SYNTHASE SUBUNIT HISF/H IGP SYNTHASE SUBUNIT HISF/H"/>
    <property type="match status" value="1"/>
</dbReference>
<dbReference type="Pfam" id="PF01884">
    <property type="entry name" value="PcrB"/>
    <property type="match status" value="1"/>
</dbReference>
<dbReference type="SUPFAM" id="SSF51395">
    <property type="entry name" value="FMN-linked oxidoreductases"/>
    <property type="match status" value="1"/>
</dbReference>
<gene>
    <name type="ordered locus">MJ1250</name>
</gene>
<comment type="function">
    <text evidence="1">Prenyltransferase that catalyzes the transfer of the geranylgeranyl moiety of geranylgeranyl diphosphate (GGPP) to the C3 hydroxyl of sn-glycerol-1-phosphate (G1P). This reaction is the first ether-bond-formation step in the biosynthesis of archaeal membrane lipids.</text>
</comment>
<comment type="catalytic activity">
    <reaction evidence="1">
        <text>sn-glycerol 1-phosphate + (2E,6E,10E)-geranylgeranyl diphosphate = sn-3-O-(geranylgeranyl)glycerol 1-phosphate + diphosphate</text>
        <dbReference type="Rhea" id="RHEA:23404"/>
        <dbReference type="ChEBI" id="CHEBI:33019"/>
        <dbReference type="ChEBI" id="CHEBI:57677"/>
        <dbReference type="ChEBI" id="CHEBI:57685"/>
        <dbReference type="ChEBI" id="CHEBI:58756"/>
        <dbReference type="EC" id="2.5.1.41"/>
    </reaction>
</comment>
<comment type="cofactor">
    <cofactor evidence="1">
        <name>Mg(2+)</name>
        <dbReference type="ChEBI" id="CHEBI:18420"/>
    </cofactor>
</comment>
<comment type="pathway">
    <text evidence="1">Membrane lipid metabolism; glycerophospholipid metabolism.</text>
</comment>
<comment type="subcellular location">
    <subcellularLocation>
        <location evidence="1">Cytoplasm</location>
    </subcellularLocation>
</comment>
<comment type="similarity">
    <text evidence="1">Belongs to the GGGP/HepGP synthase family. Group II subfamily.</text>
</comment>
<name>GGGPS_METJA</name>